<keyword id="KW-0169">Cobalamin biosynthesis</keyword>
<keyword id="KW-0489">Methyltransferase</keyword>
<keyword id="KW-1185">Reference proteome</keyword>
<keyword id="KW-0949">S-adenosyl-L-methionine</keyword>
<keyword id="KW-0808">Transferase</keyword>
<feature type="chain" id="PRO_1000133749" description="Cobalt-precorrin-5B C(1)-methyltransferase">
    <location>
        <begin position="1"/>
        <end position="351"/>
    </location>
</feature>
<reference key="1">
    <citation type="journal article" date="2009" name="J. Bacteriol.">
        <title>The genome of Thermosipho africanus TCF52B: lateral genetic connections to the Firmicutes and Archaea.</title>
        <authorList>
            <person name="Nesboe C.L."/>
            <person name="Bapteste E."/>
            <person name="Curtis B."/>
            <person name="Dahle H."/>
            <person name="Lopez P."/>
            <person name="Macleod D."/>
            <person name="Dlutek M."/>
            <person name="Bowman S."/>
            <person name="Zhaxybayeva O."/>
            <person name="Birkeland N.-K."/>
            <person name="Doolittle W.F."/>
        </authorList>
    </citation>
    <scope>NUCLEOTIDE SEQUENCE [LARGE SCALE GENOMIC DNA]</scope>
    <source>
        <strain>TCF52B</strain>
    </source>
</reference>
<dbReference type="EC" id="2.1.1.195" evidence="1"/>
<dbReference type="EMBL" id="CP001185">
    <property type="protein sequence ID" value="ACJ75524.1"/>
    <property type="molecule type" value="Genomic_DNA"/>
</dbReference>
<dbReference type="RefSeq" id="WP_012579975.1">
    <property type="nucleotide sequence ID" value="NC_011653.1"/>
</dbReference>
<dbReference type="SMR" id="B7IHG0"/>
<dbReference type="STRING" id="484019.THA_1068"/>
<dbReference type="KEGG" id="taf:THA_1068"/>
<dbReference type="eggNOG" id="COG1903">
    <property type="taxonomic scope" value="Bacteria"/>
</dbReference>
<dbReference type="HOGENOM" id="CLU_041273_1_0_0"/>
<dbReference type="OrthoDB" id="6439987at2"/>
<dbReference type="UniPathway" id="UPA00148">
    <property type="reaction ID" value="UER00227"/>
</dbReference>
<dbReference type="Proteomes" id="UP000002453">
    <property type="component" value="Chromosome"/>
</dbReference>
<dbReference type="GO" id="GO:0043780">
    <property type="term" value="F:cobalt-precorrin-5B C1-methyltransferase activity"/>
    <property type="evidence" value="ECO:0007669"/>
    <property type="project" value="RHEA"/>
</dbReference>
<dbReference type="GO" id="GO:0019251">
    <property type="term" value="P:anaerobic cobalamin biosynthetic process"/>
    <property type="evidence" value="ECO:0007669"/>
    <property type="project" value="UniProtKB-UniRule"/>
</dbReference>
<dbReference type="GO" id="GO:0032259">
    <property type="term" value="P:methylation"/>
    <property type="evidence" value="ECO:0007669"/>
    <property type="project" value="UniProtKB-KW"/>
</dbReference>
<dbReference type="Gene3D" id="3.30.2110.10">
    <property type="entry name" value="CbiD-like"/>
    <property type="match status" value="1"/>
</dbReference>
<dbReference type="HAMAP" id="MF_00787">
    <property type="entry name" value="CbiD"/>
    <property type="match status" value="1"/>
</dbReference>
<dbReference type="InterPro" id="IPR002748">
    <property type="entry name" value="CbiD"/>
</dbReference>
<dbReference type="InterPro" id="IPR036074">
    <property type="entry name" value="CbiD_sf"/>
</dbReference>
<dbReference type="NCBIfam" id="TIGR00312">
    <property type="entry name" value="cbiD"/>
    <property type="match status" value="1"/>
</dbReference>
<dbReference type="PANTHER" id="PTHR35863">
    <property type="entry name" value="COBALT-PRECORRIN-5B C(1)-METHYLTRANSFERASE"/>
    <property type="match status" value="1"/>
</dbReference>
<dbReference type="PANTHER" id="PTHR35863:SF1">
    <property type="entry name" value="COBALT-PRECORRIN-5B C(1)-METHYLTRANSFERASE"/>
    <property type="match status" value="1"/>
</dbReference>
<dbReference type="Pfam" id="PF01888">
    <property type="entry name" value="CbiD"/>
    <property type="match status" value="1"/>
</dbReference>
<dbReference type="PIRSF" id="PIRSF026782">
    <property type="entry name" value="CbiD"/>
    <property type="match status" value="1"/>
</dbReference>
<dbReference type="SUPFAM" id="SSF111342">
    <property type="entry name" value="CbiD-like"/>
    <property type="match status" value="1"/>
</dbReference>
<comment type="function">
    <text evidence="1">Catalyzes the methylation of C-1 in cobalt-precorrin-5B to form cobalt-precorrin-6A.</text>
</comment>
<comment type="catalytic activity">
    <reaction evidence="1">
        <text>Co-precorrin-5B + S-adenosyl-L-methionine = Co-precorrin-6A + S-adenosyl-L-homocysteine</text>
        <dbReference type="Rhea" id="RHEA:26285"/>
        <dbReference type="ChEBI" id="CHEBI:57856"/>
        <dbReference type="ChEBI" id="CHEBI:59789"/>
        <dbReference type="ChEBI" id="CHEBI:60063"/>
        <dbReference type="ChEBI" id="CHEBI:60064"/>
        <dbReference type="EC" id="2.1.1.195"/>
    </reaction>
</comment>
<comment type="pathway">
    <text evidence="1">Cofactor biosynthesis; adenosylcobalamin biosynthesis; cob(II)yrinate a,c-diamide from sirohydrochlorin (anaerobic route): step 6/10.</text>
</comment>
<comment type="similarity">
    <text evidence="1">Belongs to the CbiD family.</text>
</comment>
<sequence length="351" mass="38768">MKKELRYGYTTGSCATAAAKAATYMLFNDEILKSIKIDLPIGKEIELDIFYIERKEGEVICGVRKDAGDDPDVTHNMIIYAKAEKSKEFLITGGEGIGVVTKKGLPLQVGDYAINPVPRKMIESEVKKVLPEGKNVKITIFAPEGKYIAKRTLNPKLGIIGGISILGTTGIVEPLSDEAYKKTIDLEISMASSESNEICLVFGNYGKNFTTLSSKMPLVTMGNYVGFALESACKHRIKKVYLVGQIGKMIKVAGGIFNTYSYIADARNEIFTAYLSLYGLDRGILEKVMSANTTEEILDLIEGKVGKDFFENLALRIKEKCTQYVKGCLEVEVEIFSLKKGHLAKTWSDFK</sequence>
<protein>
    <recommendedName>
        <fullName evidence="1">Cobalt-precorrin-5B C(1)-methyltransferase</fullName>
        <ecNumber evidence="1">2.1.1.195</ecNumber>
    </recommendedName>
    <alternativeName>
        <fullName evidence="1">Cobalt-precorrin-6A synthase</fullName>
    </alternativeName>
</protein>
<organism>
    <name type="scientific">Thermosipho africanus (strain TCF52B)</name>
    <dbReference type="NCBI Taxonomy" id="484019"/>
    <lineage>
        <taxon>Bacteria</taxon>
        <taxon>Thermotogati</taxon>
        <taxon>Thermotogota</taxon>
        <taxon>Thermotogae</taxon>
        <taxon>Thermotogales</taxon>
        <taxon>Fervidobacteriaceae</taxon>
        <taxon>Thermosipho</taxon>
    </lineage>
</organism>
<gene>
    <name evidence="1" type="primary">cbiD</name>
    <name type="ordered locus">THA_1068</name>
</gene>
<accession>B7IHG0</accession>
<evidence type="ECO:0000255" key="1">
    <source>
        <dbReference type="HAMAP-Rule" id="MF_00787"/>
    </source>
</evidence>
<name>CBID_THEAB</name>
<proteinExistence type="inferred from homology"/>